<name>RIMO_LEGPL</name>
<proteinExistence type="inferred from homology"/>
<dbReference type="EC" id="2.8.4.4" evidence="1"/>
<dbReference type="EMBL" id="CR628337">
    <property type="protein sequence ID" value="CAH14955.1"/>
    <property type="molecule type" value="Genomic_DNA"/>
</dbReference>
<dbReference type="RefSeq" id="WP_011214897.1">
    <property type="nucleotide sequence ID" value="NC_006369.1"/>
</dbReference>
<dbReference type="SMR" id="Q5WYL5"/>
<dbReference type="KEGG" id="lpf:lpl0721"/>
<dbReference type="LegioList" id="lpl0721"/>
<dbReference type="HOGENOM" id="CLU_018697_0_0_6"/>
<dbReference type="Proteomes" id="UP000002517">
    <property type="component" value="Chromosome"/>
</dbReference>
<dbReference type="GO" id="GO:0005829">
    <property type="term" value="C:cytosol"/>
    <property type="evidence" value="ECO:0007669"/>
    <property type="project" value="TreeGrafter"/>
</dbReference>
<dbReference type="GO" id="GO:0051539">
    <property type="term" value="F:4 iron, 4 sulfur cluster binding"/>
    <property type="evidence" value="ECO:0007669"/>
    <property type="project" value="UniProtKB-UniRule"/>
</dbReference>
<dbReference type="GO" id="GO:0035599">
    <property type="term" value="F:aspartic acid methylthiotransferase activity"/>
    <property type="evidence" value="ECO:0007669"/>
    <property type="project" value="TreeGrafter"/>
</dbReference>
<dbReference type="GO" id="GO:0046872">
    <property type="term" value="F:metal ion binding"/>
    <property type="evidence" value="ECO:0007669"/>
    <property type="project" value="UniProtKB-KW"/>
</dbReference>
<dbReference type="GO" id="GO:0103039">
    <property type="term" value="F:protein methylthiotransferase activity"/>
    <property type="evidence" value="ECO:0007669"/>
    <property type="project" value="UniProtKB-EC"/>
</dbReference>
<dbReference type="GO" id="GO:0006400">
    <property type="term" value="P:tRNA modification"/>
    <property type="evidence" value="ECO:0007669"/>
    <property type="project" value="InterPro"/>
</dbReference>
<dbReference type="CDD" id="cd01335">
    <property type="entry name" value="Radical_SAM"/>
    <property type="match status" value="1"/>
</dbReference>
<dbReference type="FunFam" id="3.40.50.12160:FF:000002">
    <property type="entry name" value="Ribosomal protein S12 methylthiotransferase RimO"/>
    <property type="match status" value="1"/>
</dbReference>
<dbReference type="FunFam" id="3.80.30.20:FF:000001">
    <property type="entry name" value="tRNA-2-methylthio-N(6)-dimethylallyladenosine synthase 2"/>
    <property type="match status" value="1"/>
</dbReference>
<dbReference type="Gene3D" id="3.40.50.12160">
    <property type="entry name" value="Methylthiotransferase, N-terminal domain"/>
    <property type="match status" value="1"/>
</dbReference>
<dbReference type="Gene3D" id="2.40.50.140">
    <property type="entry name" value="Nucleic acid-binding proteins"/>
    <property type="match status" value="1"/>
</dbReference>
<dbReference type="Gene3D" id="3.80.30.20">
    <property type="entry name" value="tm_1862 like domain"/>
    <property type="match status" value="1"/>
</dbReference>
<dbReference type="HAMAP" id="MF_01865">
    <property type="entry name" value="MTTase_RimO"/>
    <property type="match status" value="1"/>
</dbReference>
<dbReference type="InterPro" id="IPR006638">
    <property type="entry name" value="Elp3/MiaA/NifB-like_rSAM"/>
</dbReference>
<dbReference type="InterPro" id="IPR005839">
    <property type="entry name" value="Methylthiotransferase"/>
</dbReference>
<dbReference type="InterPro" id="IPR020612">
    <property type="entry name" value="Methylthiotransferase_CS"/>
</dbReference>
<dbReference type="InterPro" id="IPR013848">
    <property type="entry name" value="Methylthiotransferase_N"/>
</dbReference>
<dbReference type="InterPro" id="IPR038135">
    <property type="entry name" value="Methylthiotransferase_N_sf"/>
</dbReference>
<dbReference type="InterPro" id="IPR012340">
    <property type="entry name" value="NA-bd_OB-fold"/>
</dbReference>
<dbReference type="InterPro" id="IPR005840">
    <property type="entry name" value="Ribosomal_uS12_MeSTrfase_RimO"/>
</dbReference>
<dbReference type="InterPro" id="IPR007197">
    <property type="entry name" value="rSAM"/>
</dbReference>
<dbReference type="InterPro" id="IPR023404">
    <property type="entry name" value="rSAM_horseshoe"/>
</dbReference>
<dbReference type="InterPro" id="IPR002792">
    <property type="entry name" value="TRAM_dom"/>
</dbReference>
<dbReference type="NCBIfam" id="TIGR01125">
    <property type="entry name" value="30S ribosomal protein S12 methylthiotransferase RimO"/>
    <property type="match status" value="1"/>
</dbReference>
<dbReference type="NCBIfam" id="TIGR00089">
    <property type="entry name" value="MiaB/RimO family radical SAM methylthiotransferase"/>
    <property type="match status" value="1"/>
</dbReference>
<dbReference type="PANTHER" id="PTHR43837">
    <property type="entry name" value="RIBOSOMAL PROTEIN S12 METHYLTHIOTRANSFERASE RIMO"/>
    <property type="match status" value="1"/>
</dbReference>
<dbReference type="PANTHER" id="PTHR43837:SF1">
    <property type="entry name" value="RIBOSOMAL PROTEIN US12 METHYLTHIOTRANSFERASE RIMO"/>
    <property type="match status" value="1"/>
</dbReference>
<dbReference type="Pfam" id="PF04055">
    <property type="entry name" value="Radical_SAM"/>
    <property type="match status" value="1"/>
</dbReference>
<dbReference type="Pfam" id="PF18693">
    <property type="entry name" value="TRAM_2"/>
    <property type="match status" value="1"/>
</dbReference>
<dbReference type="Pfam" id="PF00919">
    <property type="entry name" value="UPF0004"/>
    <property type="match status" value="1"/>
</dbReference>
<dbReference type="SFLD" id="SFLDG01082">
    <property type="entry name" value="B12-binding_domain_containing"/>
    <property type="match status" value="1"/>
</dbReference>
<dbReference type="SFLD" id="SFLDS00029">
    <property type="entry name" value="Radical_SAM"/>
    <property type="match status" value="1"/>
</dbReference>
<dbReference type="SFLD" id="SFLDF00274">
    <property type="entry name" value="ribosomal_protein_S12_methylth"/>
    <property type="match status" value="1"/>
</dbReference>
<dbReference type="SMART" id="SM00729">
    <property type="entry name" value="Elp3"/>
    <property type="match status" value="1"/>
</dbReference>
<dbReference type="SUPFAM" id="SSF102114">
    <property type="entry name" value="Radical SAM enzymes"/>
    <property type="match status" value="1"/>
</dbReference>
<dbReference type="PROSITE" id="PS51449">
    <property type="entry name" value="MTTASE_N"/>
    <property type="match status" value="1"/>
</dbReference>
<dbReference type="PROSITE" id="PS01278">
    <property type="entry name" value="MTTASE_RADICAL"/>
    <property type="match status" value="1"/>
</dbReference>
<dbReference type="PROSITE" id="PS51918">
    <property type="entry name" value="RADICAL_SAM"/>
    <property type="match status" value="1"/>
</dbReference>
<dbReference type="PROSITE" id="PS50926">
    <property type="entry name" value="TRAM"/>
    <property type="match status" value="1"/>
</dbReference>
<evidence type="ECO:0000255" key="1">
    <source>
        <dbReference type="HAMAP-Rule" id="MF_01865"/>
    </source>
</evidence>
<evidence type="ECO:0000255" key="2">
    <source>
        <dbReference type="PROSITE-ProRule" id="PRU01266"/>
    </source>
</evidence>
<sequence>MNHKVGFVSLGCPKALVDSERIITQLKAQGYELVPTYEDAGVVVINTCGFIDSAVQESLDTIKEAMAENGRVIVTGCLGAKADVIKNACPDVLHISGAHAYEEVVNAVHQHLPPPADPFTQLIPPQGIKLTPRHYAYLKISEGCNQKCTFCIIPTMRGKLQSYPMAQILTEAKKLKQAGVKELLVISQDTSAYGVDTRYQQVEWQGKTVNTRFYDLCEQLGELGIWVRLHYVYPYPHVDDIVPLMRDGLILPYLDIPLQHANSRILKAMKRPASSENTLLRIASWREICPDITLRSTFIVGFPGETEEEFSELLAFLKEAQLDRVGCFKYSPVEGAKANDLDNPVSEDIKEERYHRFMQVQAEISRNKLKNKIGSTQTVLIDEITEDQIIARSKSDAPEIDGLVYLPKISGITVGSFAEVVITDSDDYDLYASLV</sequence>
<accession>Q5WYL5</accession>
<comment type="function">
    <text evidence="1">Catalyzes the methylthiolation of an aspartic acid residue of ribosomal protein uS12.</text>
</comment>
<comment type="catalytic activity">
    <reaction evidence="1">
        <text>L-aspartate(89)-[ribosomal protein uS12]-hydrogen + (sulfur carrier)-SH + AH2 + 2 S-adenosyl-L-methionine = 3-methylsulfanyl-L-aspartate(89)-[ribosomal protein uS12]-hydrogen + (sulfur carrier)-H + 5'-deoxyadenosine + L-methionine + A + S-adenosyl-L-homocysteine + 2 H(+)</text>
        <dbReference type="Rhea" id="RHEA:37087"/>
        <dbReference type="Rhea" id="RHEA-COMP:10460"/>
        <dbReference type="Rhea" id="RHEA-COMP:10461"/>
        <dbReference type="Rhea" id="RHEA-COMP:14737"/>
        <dbReference type="Rhea" id="RHEA-COMP:14739"/>
        <dbReference type="ChEBI" id="CHEBI:13193"/>
        <dbReference type="ChEBI" id="CHEBI:15378"/>
        <dbReference type="ChEBI" id="CHEBI:17319"/>
        <dbReference type="ChEBI" id="CHEBI:17499"/>
        <dbReference type="ChEBI" id="CHEBI:29917"/>
        <dbReference type="ChEBI" id="CHEBI:29961"/>
        <dbReference type="ChEBI" id="CHEBI:57844"/>
        <dbReference type="ChEBI" id="CHEBI:57856"/>
        <dbReference type="ChEBI" id="CHEBI:59789"/>
        <dbReference type="ChEBI" id="CHEBI:64428"/>
        <dbReference type="ChEBI" id="CHEBI:73599"/>
        <dbReference type="EC" id="2.8.4.4"/>
    </reaction>
</comment>
<comment type="cofactor">
    <cofactor evidence="1">
        <name>[4Fe-4S] cluster</name>
        <dbReference type="ChEBI" id="CHEBI:49883"/>
    </cofactor>
    <text evidence="1">Binds 2 [4Fe-4S] clusters. One cluster is coordinated with 3 cysteines and an exchangeable S-adenosyl-L-methionine.</text>
</comment>
<comment type="subcellular location">
    <subcellularLocation>
        <location evidence="1">Cytoplasm</location>
    </subcellularLocation>
</comment>
<comment type="similarity">
    <text evidence="1">Belongs to the methylthiotransferase family. RimO subfamily.</text>
</comment>
<reference key="1">
    <citation type="journal article" date="2004" name="Nat. Genet.">
        <title>Evidence in the Legionella pneumophila genome for exploitation of host cell functions and high genome plasticity.</title>
        <authorList>
            <person name="Cazalet C."/>
            <person name="Rusniok C."/>
            <person name="Brueggemann H."/>
            <person name="Zidane N."/>
            <person name="Magnier A."/>
            <person name="Ma L."/>
            <person name="Tichit M."/>
            <person name="Jarraud S."/>
            <person name="Bouchier C."/>
            <person name="Vandenesch F."/>
            <person name="Kunst F."/>
            <person name="Etienne J."/>
            <person name="Glaser P."/>
            <person name="Buchrieser C."/>
        </authorList>
    </citation>
    <scope>NUCLEOTIDE SEQUENCE [LARGE SCALE GENOMIC DNA]</scope>
    <source>
        <strain>Lens</strain>
    </source>
</reference>
<organism>
    <name type="scientific">Legionella pneumophila (strain Lens)</name>
    <dbReference type="NCBI Taxonomy" id="297245"/>
    <lineage>
        <taxon>Bacteria</taxon>
        <taxon>Pseudomonadati</taxon>
        <taxon>Pseudomonadota</taxon>
        <taxon>Gammaproteobacteria</taxon>
        <taxon>Legionellales</taxon>
        <taxon>Legionellaceae</taxon>
        <taxon>Legionella</taxon>
    </lineage>
</organism>
<gene>
    <name evidence="1" type="primary">rimO</name>
    <name type="ordered locus">lpl0721</name>
</gene>
<keyword id="KW-0004">4Fe-4S</keyword>
<keyword id="KW-0963">Cytoplasm</keyword>
<keyword id="KW-0408">Iron</keyword>
<keyword id="KW-0411">Iron-sulfur</keyword>
<keyword id="KW-0479">Metal-binding</keyword>
<keyword id="KW-0949">S-adenosyl-L-methionine</keyword>
<keyword id="KW-0808">Transferase</keyword>
<protein>
    <recommendedName>
        <fullName evidence="1">Ribosomal protein uS12 methylthiotransferase RimO</fullName>
        <shortName evidence="1">uS12 MTTase</shortName>
        <shortName evidence="1">uS12 methylthiotransferase</shortName>
        <ecNumber evidence="1">2.8.4.4</ecNumber>
    </recommendedName>
    <alternativeName>
        <fullName evidence="1">Ribosomal protein uS12 (aspartate-C(3))-methylthiotransferase</fullName>
    </alternativeName>
    <alternativeName>
        <fullName evidence="1">Ribosome maturation factor RimO</fullName>
    </alternativeName>
</protein>
<feature type="chain" id="PRO_0000374874" description="Ribosomal protein uS12 methylthiotransferase RimO">
    <location>
        <begin position="1"/>
        <end position="435"/>
    </location>
</feature>
<feature type="domain" description="MTTase N-terminal" evidence="1">
    <location>
        <begin position="3"/>
        <end position="113"/>
    </location>
</feature>
<feature type="domain" description="Radical SAM core" evidence="2">
    <location>
        <begin position="130"/>
        <end position="367"/>
    </location>
</feature>
<feature type="domain" description="TRAM" evidence="1">
    <location>
        <begin position="370"/>
        <end position="435"/>
    </location>
</feature>
<feature type="binding site" evidence="1">
    <location>
        <position position="12"/>
    </location>
    <ligand>
        <name>[4Fe-4S] cluster</name>
        <dbReference type="ChEBI" id="CHEBI:49883"/>
        <label>1</label>
    </ligand>
</feature>
<feature type="binding site" evidence="1">
    <location>
        <position position="48"/>
    </location>
    <ligand>
        <name>[4Fe-4S] cluster</name>
        <dbReference type="ChEBI" id="CHEBI:49883"/>
        <label>1</label>
    </ligand>
</feature>
<feature type="binding site" evidence="1">
    <location>
        <position position="77"/>
    </location>
    <ligand>
        <name>[4Fe-4S] cluster</name>
        <dbReference type="ChEBI" id="CHEBI:49883"/>
        <label>1</label>
    </ligand>
</feature>
<feature type="binding site" evidence="1">
    <location>
        <position position="144"/>
    </location>
    <ligand>
        <name>[4Fe-4S] cluster</name>
        <dbReference type="ChEBI" id="CHEBI:49883"/>
        <label>2</label>
        <note>4Fe-4S-S-AdoMet</note>
    </ligand>
</feature>
<feature type="binding site" evidence="1">
    <location>
        <position position="148"/>
    </location>
    <ligand>
        <name>[4Fe-4S] cluster</name>
        <dbReference type="ChEBI" id="CHEBI:49883"/>
        <label>2</label>
        <note>4Fe-4S-S-AdoMet</note>
    </ligand>
</feature>
<feature type="binding site" evidence="1">
    <location>
        <position position="151"/>
    </location>
    <ligand>
        <name>[4Fe-4S] cluster</name>
        <dbReference type="ChEBI" id="CHEBI:49883"/>
        <label>2</label>
        <note>4Fe-4S-S-AdoMet</note>
    </ligand>
</feature>